<organism>
    <name type="scientific">Picosynechococcus sp. (strain ATCC 27264 / PCC 7002 / PR-6)</name>
    <name type="common">Agmenellum quadruplicatum</name>
    <dbReference type="NCBI Taxonomy" id="32049"/>
    <lineage>
        <taxon>Bacteria</taxon>
        <taxon>Bacillati</taxon>
        <taxon>Cyanobacteriota</taxon>
        <taxon>Cyanophyceae</taxon>
        <taxon>Oscillatoriophycideae</taxon>
        <taxon>Chroococcales</taxon>
        <taxon>Geminocystaceae</taxon>
        <taxon>Picosynechococcus</taxon>
    </lineage>
</organism>
<sequence length="248" mass="27161">MEKKLISLFSGAGGMDIGFHAAGFSTAVAVEQDPSCCNTLRLNMPDTPVIEGDITSITTQVILEAAKVNPLEIDLVIGGPPCQSFSLAGKRMGMDDPRGMLVLEFLRVVREALPKCFVMENVKGMINWSKGKALEAIMTEASQPIKYAGKEYKYAVSYHVLNAADFGVPQFRERVFIVGNRLGKTFQFPEPTHGPSNQARQIDLFGKQLKPYKTVQDAISTLPPATPPSAMALRVSQTIKDRIKNHGY</sequence>
<comment type="function">
    <text evidence="3 4">A methylase, recognizes the double-stranded sequence 5'-CYCGRG-3', methylates C-1 on both strands, and protects the DNA from cleavage by the AquI endonuclease.</text>
</comment>
<comment type="catalytic activity">
    <reaction evidence="2">
        <text>a 2'-deoxycytidine in DNA + S-adenosyl-L-methionine = a 5-methyl-2'-deoxycytidine in DNA + S-adenosyl-L-homocysteine + H(+)</text>
        <dbReference type="Rhea" id="RHEA:13681"/>
        <dbReference type="Rhea" id="RHEA-COMP:11369"/>
        <dbReference type="Rhea" id="RHEA-COMP:11370"/>
        <dbReference type="ChEBI" id="CHEBI:15378"/>
        <dbReference type="ChEBI" id="CHEBI:57856"/>
        <dbReference type="ChEBI" id="CHEBI:59789"/>
        <dbReference type="ChEBI" id="CHEBI:85452"/>
        <dbReference type="ChEBI" id="CHEBI:85454"/>
        <dbReference type="EC" id="2.1.1.37"/>
    </reaction>
</comment>
<comment type="subunit">
    <text evidence="6">Heterodimer of an alpha and a beta subunit.</text>
</comment>
<comment type="domain">
    <text evidence="6">Corresponds to the N-terminal half of the enzymatic domain.</text>
</comment>
<comment type="similarity">
    <text evidence="1">Belongs to the class I-like SAM-binding methyltransferase superfamily. C5-methyltransferase family.</text>
</comment>
<accession>P34882</accession>
<accession>B1XKE1</accession>
<keyword id="KW-0238">DNA-binding</keyword>
<keyword id="KW-0489">Methyltransferase</keyword>
<keyword id="KW-1185">Reference proteome</keyword>
<keyword id="KW-0680">Restriction system</keyword>
<keyword id="KW-0949">S-adenosyl-L-methionine</keyword>
<keyword id="KW-0808">Transferase</keyword>
<evidence type="ECO:0000255" key="1">
    <source>
        <dbReference type="PROSITE-ProRule" id="PRU01016"/>
    </source>
</evidence>
<evidence type="ECO:0000255" key="2">
    <source>
        <dbReference type="PROSITE-ProRule" id="PRU10018"/>
    </source>
</evidence>
<evidence type="ECO:0000269" key="3">
    <source>
    </source>
</evidence>
<evidence type="ECO:0000303" key="4">
    <source>
    </source>
</evidence>
<evidence type="ECO:0000303" key="5">
    <source>
    </source>
</evidence>
<evidence type="ECO:0000305" key="6">
    <source>
    </source>
</evidence>
<proteinExistence type="evidence at protein level"/>
<name>MTAA_PICP2</name>
<dbReference type="EC" id="2.1.1.37"/>
<dbReference type="EMBL" id="M28051">
    <property type="protein sequence ID" value="AAA22067.1"/>
    <property type="molecule type" value="Genomic_DNA"/>
</dbReference>
<dbReference type="EMBL" id="CP000951">
    <property type="protein sequence ID" value="ACA99187.1"/>
    <property type="molecule type" value="Genomic_DNA"/>
</dbReference>
<dbReference type="RefSeq" id="WP_012306810.1">
    <property type="nucleotide sequence ID" value="NZ_JAHHPU010000001.1"/>
</dbReference>
<dbReference type="SMR" id="P34882"/>
<dbReference type="STRING" id="32049.SYNPCC7002_A1188"/>
<dbReference type="REBASE" id="3283">
    <property type="entry name" value="M.AquI"/>
</dbReference>
<dbReference type="KEGG" id="syp:SYNPCC7002_A1188"/>
<dbReference type="eggNOG" id="COG0270">
    <property type="taxonomic scope" value="Bacteria"/>
</dbReference>
<dbReference type="HOGENOM" id="CLU_006958_7_0_3"/>
<dbReference type="PRO" id="PR:P34882"/>
<dbReference type="Proteomes" id="UP000001688">
    <property type="component" value="Chromosome"/>
</dbReference>
<dbReference type="GO" id="GO:0003886">
    <property type="term" value="F:DNA (cytosine-5-)-methyltransferase activity"/>
    <property type="evidence" value="ECO:0007669"/>
    <property type="project" value="UniProtKB-EC"/>
</dbReference>
<dbReference type="GO" id="GO:0003677">
    <property type="term" value="F:DNA binding"/>
    <property type="evidence" value="ECO:0007669"/>
    <property type="project" value="UniProtKB-KW"/>
</dbReference>
<dbReference type="GO" id="GO:0009307">
    <property type="term" value="P:DNA restriction-modification system"/>
    <property type="evidence" value="ECO:0007669"/>
    <property type="project" value="UniProtKB-KW"/>
</dbReference>
<dbReference type="GO" id="GO:0032259">
    <property type="term" value="P:methylation"/>
    <property type="evidence" value="ECO:0007669"/>
    <property type="project" value="UniProtKB-KW"/>
</dbReference>
<dbReference type="GO" id="GO:0044027">
    <property type="term" value="P:negative regulation of gene expression via chromosomal CpG island methylation"/>
    <property type="evidence" value="ECO:0007669"/>
    <property type="project" value="TreeGrafter"/>
</dbReference>
<dbReference type="Gene3D" id="3.40.50.150">
    <property type="entry name" value="Vaccinia Virus protein VP39"/>
    <property type="match status" value="1"/>
</dbReference>
<dbReference type="InterPro" id="IPR050390">
    <property type="entry name" value="C5-Methyltransferase"/>
</dbReference>
<dbReference type="InterPro" id="IPR018117">
    <property type="entry name" value="C5_DNA_meth_AS"/>
</dbReference>
<dbReference type="InterPro" id="IPR001525">
    <property type="entry name" value="C5_MeTfrase"/>
</dbReference>
<dbReference type="InterPro" id="IPR029063">
    <property type="entry name" value="SAM-dependent_MTases_sf"/>
</dbReference>
<dbReference type="NCBIfam" id="TIGR00675">
    <property type="entry name" value="dcm"/>
    <property type="match status" value="1"/>
</dbReference>
<dbReference type="PANTHER" id="PTHR10629">
    <property type="entry name" value="CYTOSINE-SPECIFIC METHYLTRANSFERASE"/>
    <property type="match status" value="1"/>
</dbReference>
<dbReference type="PANTHER" id="PTHR10629:SF52">
    <property type="entry name" value="DNA (CYTOSINE-5)-METHYLTRANSFERASE 1"/>
    <property type="match status" value="1"/>
</dbReference>
<dbReference type="Pfam" id="PF00145">
    <property type="entry name" value="DNA_methylase"/>
    <property type="match status" value="1"/>
</dbReference>
<dbReference type="PRINTS" id="PR00105">
    <property type="entry name" value="C5METTRFRASE"/>
</dbReference>
<dbReference type="SUPFAM" id="SSF53335">
    <property type="entry name" value="S-adenosyl-L-methionine-dependent methyltransferases"/>
    <property type="match status" value="1"/>
</dbReference>
<dbReference type="PROSITE" id="PS00094">
    <property type="entry name" value="C5_MTASE_1"/>
    <property type="match status" value="1"/>
</dbReference>
<dbReference type="PROSITE" id="PS51679">
    <property type="entry name" value="SAM_MT_C5"/>
    <property type="match status" value="1"/>
</dbReference>
<gene>
    <name type="primary">aquIMA</name>
    <name type="synonym">dcm</name>
    <name type="ordered locus">SYNPCC7002_A1188</name>
</gene>
<protein>
    <recommendedName>
        <fullName evidence="4">Type II methyltransferase M.AquIA</fullName>
        <shortName evidence="4">M.AquiA</shortName>
        <ecNumber>2.1.1.37</ecNumber>
    </recommendedName>
    <alternativeName>
        <fullName>Cytosine-specific methyltransferase AquI subunit alpha</fullName>
    </alternativeName>
    <alternativeName>
        <fullName evidence="5">Modification methylase AquI subunit alpha</fullName>
        <shortName evidence="5">M.AquI subunit alpha</shortName>
    </alternativeName>
</protein>
<feature type="chain" id="PRO_0000087854" description="Type II methyltransferase M.AquIA">
    <location>
        <begin position="1"/>
        <end position="248"/>
    </location>
</feature>
<feature type="domain" description="SAM-dependent MTase C5-type" evidence="1">
    <location>
        <begin position="3"/>
        <end position="248"/>
    </location>
</feature>
<feature type="active site" evidence="1 2">
    <location>
        <position position="82"/>
    </location>
</feature>
<reference key="1">
    <citation type="journal article" date="1990" name="J. Bacteriol.">
        <title>Agmenellum quadruplicatum M.AquI, a novel modification methylase.</title>
        <authorList>
            <person name="Karreman C."/>
            <person name="de Waard A."/>
        </authorList>
    </citation>
    <scope>NUCLEOTIDE SEQUENCE [GENOMIC DNA]</scope>
    <scope>FUNCTION</scope>
    <scope>PROBABLE SUBUNIT</scope>
    <source>
        <strain>ATCC 27264 / PCC 7002 / PR-6</strain>
    </source>
</reference>
<reference key="2">
    <citation type="submission" date="2008-02" db="EMBL/GenBank/DDBJ databases">
        <title>Complete sequence of Synechococcus sp. PCC 7002.</title>
        <authorList>
            <person name="Li T."/>
            <person name="Zhao J."/>
            <person name="Zhao C."/>
            <person name="Liu Z."/>
            <person name="Zhao F."/>
            <person name="Marquardt J."/>
            <person name="Nomura C.T."/>
            <person name="Persson S."/>
            <person name="Detter J.C."/>
            <person name="Richardson P.M."/>
            <person name="Lanz C."/>
            <person name="Schuster S.C."/>
            <person name="Wang J."/>
            <person name="Li S."/>
            <person name="Huang X."/>
            <person name="Cai T."/>
            <person name="Yu Z."/>
            <person name="Luo J."/>
            <person name="Zhao J."/>
            <person name="Bryant D.A."/>
        </authorList>
    </citation>
    <scope>NUCLEOTIDE SEQUENCE [LARGE SCALE GENOMIC DNA]</scope>
    <source>
        <strain>ATCC 27264 / PCC 7002 / PR-6</strain>
    </source>
</reference>
<reference key="3">
    <citation type="journal article" date="2003" name="Nucleic Acids Res.">
        <title>A nomenclature for restriction enzymes, DNA methyltransferases, homing endonucleases and their genes.</title>
        <authorList>
            <person name="Roberts R.J."/>
            <person name="Belfort M."/>
            <person name="Bestor T."/>
            <person name="Bhagwat A.S."/>
            <person name="Bickle T.A."/>
            <person name="Bitinaite J."/>
            <person name="Blumenthal R.M."/>
            <person name="Degtyarev S.K."/>
            <person name="Dryden D.T."/>
            <person name="Dybvig K."/>
            <person name="Firman K."/>
            <person name="Gromova E.S."/>
            <person name="Gumport R.I."/>
            <person name="Halford S.E."/>
            <person name="Hattman S."/>
            <person name="Heitman J."/>
            <person name="Hornby D.P."/>
            <person name="Janulaitis A."/>
            <person name="Jeltsch A."/>
            <person name="Josephsen J."/>
            <person name="Kiss A."/>
            <person name="Klaenhammer T.R."/>
            <person name="Kobayashi I."/>
            <person name="Kong H."/>
            <person name="Krueger D.H."/>
            <person name="Lacks S."/>
            <person name="Marinus M.G."/>
            <person name="Miyahara M."/>
            <person name="Morgan R.D."/>
            <person name="Murray N.E."/>
            <person name="Nagaraja V."/>
            <person name="Piekarowicz A."/>
            <person name="Pingoud A."/>
            <person name="Raleigh E."/>
            <person name="Rao D.N."/>
            <person name="Reich N."/>
            <person name="Repin V.E."/>
            <person name="Selker E.U."/>
            <person name="Shaw P.C."/>
            <person name="Stein D.C."/>
            <person name="Stoddard B.L."/>
            <person name="Szybalski W."/>
            <person name="Trautner T.A."/>
            <person name="Van Etten J.L."/>
            <person name="Vitor J.M."/>
            <person name="Wilson G.G."/>
            <person name="Xu S.Y."/>
        </authorList>
    </citation>
    <scope>NOMENCLATURE</scope>
</reference>